<organism>
    <name type="scientific">Caenorhabditis elegans</name>
    <dbReference type="NCBI Taxonomy" id="6239"/>
    <lineage>
        <taxon>Eukaryota</taxon>
        <taxon>Metazoa</taxon>
        <taxon>Ecdysozoa</taxon>
        <taxon>Nematoda</taxon>
        <taxon>Chromadorea</taxon>
        <taxon>Rhabditida</taxon>
        <taxon>Rhabditina</taxon>
        <taxon>Rhabditomorpha</taxon>
        <taxon>Rhabditoidea</taxon>
        <taxon>Rhabditidae</taxon>
        <taxon>Peloderinae</taxon>
        <taxon>Caenorhabditis</taxon>
    </lineage>
</organism>
<keyword id="KW-0131">Cell cycle</keyword>
<keyword id="KW-0132">Cell division</keyword>
<keyword id="KW-0137">Centromere</keyword>
<keyword id="KW-0158">Chromosome</keyword>
<keyword id="KW-0963">Cytoplasm</keyword>
<keyword id="KW-0206">Cytoskeleton</keyword>
<keyword id="KW-0995">Kinetochore</keyword>
<keyword id="KW-0469">Meiosis</keyword>
<keyword id="KW-0493">Microtubule</keyword>
<keyword id="KW-0498">Mitosis</keyword>
<keyword id="KW-1185">Reference proteome</keyword>
<feature type="chain" id="PRO_0000089874" description="Protein CLASP-2">
    <location>
        <begin position="1"/>
        <end position="1020"/>
    </location>
</feature>
<feature type="repeat" description="HEAT">
    <location>
        <begin position="954"/>
        <end position="992"/>
    </location>
</feature>
<feature type="region of interest" description="Disordered" evidence="1">
    <location>
        <begin position="259"/>
        <end position="280"/>
    </location>
</feature>
<feature type="region of interest" description="Disordered" evidence="1">
    <location>
        <begin position="329"/>
        <end position="387"/>
    </location>
</feature>
<feature type="region of interest" description="Disordered" evidence="1">
    <location>
        <begin position="419"/>
        <end position="461"/>
    </location>
</feature>
<feature type="compositionally biased region" description="Low complexity" evidence="1">
    <location>
        <begin position="259"/>
        <end position="271"/>
    </location>
</feature>
<feature type="compositionally biased region" description="Polar residues" evidence="1">
    <location>
        <begin position="329"/>
        <end position="343"/>
    </location>
</feature>
<feature type="compositionally biased region" description="Low complexity" evidence="1">
    <location>
        <begin position="372"/>
        <end position="381"/>
    </location>
</feature>
<feature type="compositionally biased region" description="Polar residues" evidence="1">
    <location>
        <begin position="450"/>
        <end position="460"/>
    </location>
</feature>
<protein>
    <recommendedName>
        <fullName>Protein CLASP-2</fullName>
    </recommendedName>
</protein>
<name>CLAS2_CAEEL</name>
<gene>
    <name type="primary">cls-2</name>
    <name type="ORF">R107.6</name>
</gene>
<sequence>MSRVISRSTPGGTCIVSKDDFLKSFEEVPKMEISSPSDFKEKLDQTIETLSKGQEDWNKRMNKLKQIRSMVVHGEDVIGREQLLSQLVRLTDCLDLSVKDLRSQILREAAITCGFLFKRFGTDVRQIAERCLPSAFAQVAVSTKVMATCGAVLTLFIVEFIQTKQIFTCIASYSTSKDKNQRRQLCALLEIVLEHWNEKIKRTVLPQIGELIKAAICDADPETRVAGRKAFSKLDALHSTEADKLFASVDSSKQKMLRASDAASSSTSINSERGTAPFRSKLSAGSIGGIRNAPNISSKFLAQRSASAIDTKQVTRMATSVSRTPNIRPMTTRTLSKIDTSPGGSKFARPTVGALGSRTSSNLRARGSVPTSQPGSRNGSPPRRPSATEAFPAEMQRVKSNLGSNSFVSSLSAEEATKLQKAMNTAKESLRQPSRNDDDEFLLPKRPTPQKATPQKSALDTSRVEEVIRACSSTSANEKREGIKMLAGIVSEPNLSNAEIKSLGAVLNRLLGESTNQIVLESISSFVKTHHPRLSDWLKLGLGKLFAKKGAEMTLNSKKQISTTISCILSSFDPTLQLKSTCELVCDPIHLMSPKSRVVLLEYLNELLGKYMERGSSFNTKEMKATILKMFSWMADQRNEQLITPHGEKVLCSLFALNNADFSALFNDFNPDYRDWAYKVLQSHGHDQHVPQQDAVSEEACVRATISTTAAQIEDFVVSRNLDMTPVKSPSTRAISSGFKRVDAEPLRPLSSEMNSQHRDEELSFNESFDRLKLNSTTHLIDDTSEQSKYVASKLAQISGDMGAQQYEGLLSIQTMLCEGSFTLWEQNFAKLLIAVFDVLSKSESDANKKVALRVLTKMCTSQASRLFDSTEMAICKVLDAAVNSQDGTMNVTADDCLKTLATHLPLAKVVNISQLILNEEKAQEPKASLVLKMMTRLFEGLQADELSPVVDDLAPCVIKSYDSPSSAVRKTAVYCLVAMVNKLGMKTMEPHLQNLSSGKLNLVQVYVNRAMSSSSHSHV</sequence>
<evidence type="ECO:0000256" key="1">
    <source>
        <dbReference type="SAM" id="MobiDB-lite"/>
    </source>
</evidence>
<evidence type="ECO:0000269" key="2">
    <source>
    </source>
</evidence>
<evidence type="ECO:0000269" key="3">
    <source>
    </source>
</evidence>
<evidence type="ECO:0000305" key="4"/>
<comment type="function">
    <text evidence="2 3">Probable microtubule plus-end tracking protein that promotes the stabilization of dynamic microtubules. Required for the formation of mitotic and meiotic spindles. Specifically promotes the polymerization of kinetochore-bound microtubules. Also required for cytoplasmic streaming. Essential for embryonic development.</text>
</comment>
<comment type="subunit">
    <text evidence="3">Interacts with hcp-1 and hcp-2.</text>
</comment>
<comment type="subcellular location">
    <subcellularLocation>
        <location>Cytoplasm</location>
        <location>Cytoskeleton</location>
    </subcellularLocation>
    <subcellularLocation>
        <location>Cytoplasm</location>
        <location>Cytoskeleton</location>
        <location>Microtubule organizing center</location>
        <location>Centrosome</location>
    </subcellularLocation>
    <subcellularLocation>
        <location>Chromosome</location>
        <location>Centromere</location>
        <location>Kinetochore</location>
    </subcellularLocation>
    <subcellularLocation>
        <location>Cytoplasm</location>
        <location>Cytoskeleton</location>
        <location>Spindle</location>
    </subcellularLocation>
    <text>Localized to kinetochores during metaphase, and to the spindle region. Kinetochore localization requires hcp-1 and hcp-2.</text>
</comment>
<comment type="similarity">
    <text evidence="4">Belongs to the CLASP family.</text>
</comment>
<reference key="1">
    <citation type="journal article" date="1994" name="Nature">
        <title>2.2 Mb of contiguous nucleotide sequence from chromosome III of C. elegans.</title>
        <authorList>
            <person name="Wilson R."/>
            <person name="Ainscough R."/>
            <person name="Anderson K."/>
            <person name="Baynes C."/>
            <person name="Berks M."/>
            <person name="Bonfield J."/>
            <person name="Burton J."/>
            <person name="Connell M."/>
            <person name="Copsey T."/>
            <person name="Cooper J."/>
            <person name="Coulson A."/>
            <person name="Craxton M."/>
            <person name="Dear S."/>
            <person name="Du Z."/>
            <person name="Durbin R."/>
            <person name="Favello A."/>
            <person name="Fraser A."/>
            <person name="Fulton L."/>
            <person name="Gardner A."/>
            <person name="Green P."/>
            <person name="Hawkins T."/>
            <person name="Hillier L."/>
            <person name="Jier M."/>
            <person name="Johnston L."/>
            <person name="Jones M."/>
            <person name="Kershaw J."/>
            <person name="Kirsten J."/>
            <person name="Laisster N."/>
            <person name="Latreille P."/>
            <person name="Lightning J."/>
            <person name="Lloyd C."/>
            <person name="Mortimore B."/>
            <person name="O'Callaghan M."/>
            <person name="Parsons J."/>
            <person name="Percy C."/>
            <person name="Rifken L."/>
            <person name="Roopra A."/>
            <person name="Saunders D."/>
            <person name="Shownkeen R."/>
            <person name="Sims M."/>
            <person name="Smaldon N."/>
            <person name="Smith A."/>
            <person name="Smith M."/>
            <person name="Sonnhammer E."/>
            <person name="Staden R."/>
            <person name="Sulston J."/>
            <person name="Thierry-Mieg J."/>
            <person name="Thomas K."/>
            <person name="Vaudin M."/>
            <person name="Vaughan K."/>
            <person name="Waterston R."/>
            <person name="Watson A."/>
            <person name="Weinstock L."/>
            <person name="Wilkinson-Sproat J."/>
            <person name="Wohldman P."/>
        </authorList>
    </citation>
    <scope>NUCLEOTIDE SEQUENCE [LARGE SCALE GENOMIC DNA]</scope>
    <source>
        <strain>Bristol N2</strain>
    </source>
</reference>
<reference key="2">
    <citation type="journal article" date="1998" name="Science">
        <title>Genome sequence of the nematode C. elegans: a platform for investigating biology.</title>
        <authorList>
            <consortium name="The C. elegans sequencing consortium"/>
        </authorList>
    </citation>
    <scope>NUCLEOTIDE SEQUENCE [LARGE SCALE GENOMIC DNA]</scope>
    <source>
        <strain>Bristol N2</strain>
    </source>
</reference>
<reference key="3">
    <citation type="journal article" date="2003" name="Dev. Biol.">
        <title>MEI-1/katanin is required for translocation of the meiosis I spindle to the oocyte cortex in C elegans.</title>
        <authorList>
            <person name="Yang H.-Y."/>
            <person name="McNally K."/>
            <person name="McNally F.J."/>
        </authorList>
    </citation>
    <scope>FUNCTION</scope>
</reference>
<reference key="4">
    <citation type="journal article" date="2003" name="Genes Dev.">
        <title>KNL-1 directs assembly of the microtubule-binding interface of the kinetochore in C. elegans.</title>
        <authorList>
            <person name="Desai A."/>
            <person name="Rybina S."/>
            <person name="Mueller-Reichert T."/>
            <person name="Shevchenko A."/>
            <person name="Shevchenko A."/>
            <person name="Hyman A."/>
            <person name="Oegema K."/>
        </authorList>
    </citation>
    <scope>SUBCELLULAR LOCATION</scope>
</reference>
<reference key="5">
    <citation type="journal article" date="2005" name="Curr. Biol.">
        <title>The CENP-F-like proteins HCP-1 and HCP-2 target CLASP to kinetochores to mediate chromosome segregation.</title>
        <authorList>
            <person name="Cheeseman I.M."/>
            <person name="MacLeod I."/>
            <person name="Yates J.R. III"/>
            <person name="Oegema K."/>
            <person name="Desai A."/>
        </authorList>
    </citation>
    <scope>IDENTIFICATION BY MASS SPECTROMETRY</scope>
    <scope>FUNCTION</scope>
    <scope>INTERACTION WITH HCP-1 AND HCP-2</scope>
    <scope>SUBCELLULAR LOCATION</scope>
</reference>
<dbReference type="EMBL" id="Z14092">
    <property type="protein sequence ID" value="CAA78472.2"/>
    <property type="molecule type" value="Genomic_DNA"/>
</dbReference>
<dbReference type="PIR" id="E88546">
    <property type="entry name" value="E88546"/>
</dbReference>
<dbReference type="PIR" id="S30876">
    <property type="entry name" value="S30876"/>
</dbReference>
<dbReference type="RefSeq" id="NP_499005.2">
    <property type="nucleotide sequence ID" value="NM_066604.6"/>
</dbReference>
<dbReference type="SMR" id="P32744"/>
<dbReference type="BioGRID" id="41479">
    <property type="interactions" value="10"/>
</dbReference>
<dbReference type="FunCoup" id="P32744">
    <property type="interactions" value="2916"/>
</dbReference>
<dbReference type="IntAct" id="P32744">
    <property type="interactions" value="3"/>
</dbReference>
<dbReference type="STRING" id="6239.R107.6b.1"/>
<dbReference type="iPTMnet" id="P32744"/>
<dbReference type="PaxDb" id="6239-R107.6b"/>
<dbReference type="PeptideAtlas" id="P32744"/>
<dbReference type="EnsemblMetazoa" id="R107.6a.1">
    <property type="protein sequence ID" value="R107.6a.1"/>
    <property type="gene ID" value="WBGene00000549"/>
</dbReference>
<dbReference type="GeneID" id="176280"/>
<dbReference type="KEGG" id="cel:CELE_R107.6"/>
<dbReference type="UCSC" id="R107.6.2">
    <property type="organism name" value="c. elegans"/>
</dbReference>
<dbReference type="AGR" id="WB:WBGene00000549"/>
<dbReference type="CTD" id="176280"/>
<dbReference type="WormBase" id="R107.6a">
    <property type="protein sequence ID" value="CE37546"/>
    <property type="gene ID" value="WBGene00000549"/>
    <property type="gene designation" value="cls-2"/>
</dbReference>
<dbReference type="eggNOG" id="KOG2956">
    <property type="taxonomic scope" value="Eukaryota"/>
</dbReference>
<dbReference type="GeneTree" id="ENSGT00940000168069"/>
<dbReference type="InParanoid" id="P32744"/>
<dbReference type="OrthoDB" id="46159at2759"/>
<dbReference type="PhylomeDB" id="P32744"/>
<dbReference type="PRO" id="PR:P32744"/>
<dbReference type="Proteomes" id="UP000001940">
    <property type="component" value="Chromosome III"/>
</dbReference>
<dbReference type="Bgee" id="WBGene00000549">
    <property type="expression patterns" value="Expressed in pharyngeal muscle cell (C elegans) and 4 other cell types or tissues"/>
</dbReference>
<dbReference type="ExpressionAtlas" id="P32744">
    <property type="expression patterns" value="baseline and differential"/>
</dbReference>
<dbReference type="GO" id="GO:0045180">
    <property type="term" value="C:basal cortex"/>
    <property type="evidence" value="ECO:0000318"/>
    <property type="project" value="GO_Central"/>
</dbReference>
<dbReference type="GO" id="GO:0005813">
    <property type="term" value="C:centrosome"/>
    <property type="evidence" value="ECO:0000314"/>
    <property type="project" value="WormBase"/>
</dbReference>
<dbReference type="GO" id="GO:0005737">
    <property type="term" value="C:cytoplasm"/>
    <property type="evidence" value="ECO:0000314"/>
    <property type="project" value="WormBase"/>
</dbReference>
<dbReference type="GO" id="GO:0005881">
    <property type="term" value="C:cytoplasmic microtubule"/>
    <property type="evidence" value="ECO:0000318"/>
    <property type="project" value="GO_Central"/>
</dbReference>
<dbReference type="GO" id="GO:0000776">
    <property type="term" value="C:kinetochore"/>
    <property type="evidence" value="ECO:0000314"/>
    <property type="project" value="UniProtKB"/>
</dbReference>
<dbReference type="GO" id="GO:0005815">
    <property type="term" value="C:microtubule organizing center"/>
    <property type="evidence" value="ECO:0000318"/>
    <property type="project" value="GO_Central"/>
</dbReference>
<dbReference type="GO" id="GO:0072686">
    <property type="term" value="C:mitotic spindle"/>
    <property type="evidence" value="ECO:0000314"/>
    <property type="project" value="WormBase"/>
</dbReference>
<dbReference type="GO" id="GO:0005634">
    <property type="term" value="C:nucleus"/>
    <property type="evidence" value="ECO:0000314"/>
    <property type="project" value="WormBase"/>
</dbReference>
<dbReference type="GO" id="GO:0005876">
    <property type="term" value="C:spindle microtubule"/>
    <property type="evidence" value="ECO:0000318"/>
    <property type="project" value="GO_Central"/>
</dbReference>
<dbReference type="GO" id="GO:0051233">
    <property type="term" value="C:spindle midzone"/>
    <property type="evidence" value="ECO:0000314"/>
    <property type="project" value="WormBase"/>
</dbReference>
<dbReference type="GO" id="GO:0008017">
    <property type="term" value="F:microtubule binding"/>
    <property type="evidence" value="ECO:0000250"/>
    <property type="project" value="WormBase"/>
</dbReference>
<dbReference type="GO" id="GO:0030953">
    <property type="term" value="P:astral microtubule organization"/>
    <property type="evidence" value="ECO:0000315"/>
    <property type="project" value="WormBase"/>
</dbReference>
<dbReference type="GO" id="GO:0051316">
    <property type="term" value="P:attachment of meiotic spindle microtubules to kinetochore"/>
    <property type="evidence" value="ECO:0000315"/>
    <property type="project" value="UniProtKB"/>
</dbReference>
<dbReference type="GO" id="GO:0099636">
    <property type="term" value="P:cytoplasmic streaming"/>
    <property type="evidence" value="ECO:0000315"/>
    <property type="project" value="WormBase"/>
</dbReference>
<dbReference type="GO" id="GO:0040001">
    <property type="term" value="P:establishment of mitotic spindle localization"/>
    <property type="evidence" value="ECO:0000315"/>
    <property type="project" value="WormBase"/>
</dbReference>
<dbReference type="GO" id="GO:0051307">
    <property type="term" value="P:meiotic chromosome separation"/>
    <property type="evidence" value="ECO:0000315"/>
    <property type="project" value="UniProtKB"/>
</dbReference>
<dbReference type="GO" id="GO:0051257">
    <property type="term" value="P:meiotic spindle midzone assembly"/>
    <property type="evidence" value="ECO:0000315"/>
    <property type="project" value="UniProtKB"/>
</dbReference>
<dbReference type="GO" id="GO:0000212">
    <property type="term" value="P:meiotic spindle organization"/>
    <property type="evidence" value="ECO:0000315"/>
    <property type="project" value="UniProtKB"/>
</dbReference>
<dbReference type="GO" id="GO:0046785">
    <property type="term" value="P:microtubule polymerization"/>
    <property type="evidence" value="ECO:0000314"/>
    <property type="project" value="WormBase"/>
</dbReference>
<dbReference type="GO" id="GO:0000281">
    <property type="term" value="P:mitotic cytokinesis"/>
    <property type="evidence" value="ECO:0000315"/>
    <property type="project" value="WormBase"/>
</dbReference>
<dbReference type="GO" id="GO:0051306">
    <property type="term" value="P:mitotic sister chromatid separation"/>
    <property type="evidence" value="ECO:0000315"/>
    <property type="project" value="WormBase"/>
</dbReference>
<dbReference type="GO" id="GO:0090307">
    <property type="term" value="P:mitotic spindle assembly"/>
    <property type="evidence" value="ECO:0000318"/>
    <property type="project" value="GO_Central"/>
</dbReference>
<dbReference type="GO" id="GO:0051256">
    <property type="term" value="P:mitotic spindle midzone assembly"/>
    <property type="evidence" value="ECO:0000315"/>
    <property type="project" value="WormBase"/>
</dbReference>
<dbReference type="GO" id="GO:0031134">
    <property type="term" value="P:sister chromatid biorientation"/>
    <property type="evidence" value="ECO:0000315"/>
    <property type="project" value="WormBase"/>
</dbReference>
<dbReference type="FunFam" id="1.25.10.10:FF:000607">
    <property type="entry name" value="Protein CLASP-2"/>
    <property type="match status" value="1"/>
</dbReference>
<dbReference type="FunFam" id="1.25.10.10:FF:001253">
    <property type="entry name" value="Protein CLASP-2"/>
    <property type="match status" value="1"/>
</dbReference>
<dbReference type="FunFam" id="1.25.10.10:FF:001467">
    <property type="entry name" value="Protein CLASP-2"/>
    <property type="match status" value="1"/>
</dbReference>
<dbReference type="Gene3D" id="1.25.10.10">
    <property type="entry name" value="Leucine-rich Repeat Variant"/>
    <property type="match status" value="3"/>
</dbReference>
<dbReference type="InterPro" id="IPR011989">
    <property type="entry name" value="ARM-like"/>
</dbReference>
<dbReference type="InterPro" id="IPR016024">
    <property type="entry name" value="ARM-type_fold"/>
</dbReference>
<dbReference type="InterPro" id="IPR024395">
    <property type="entry name" value="CLASP_N_dom"/>
</dbReference>
<dbReference type="InterPro" id="IPR034085">
    <property type="entry name" value="TOG"/>
</dbReference>
<dbReference type="PANTHER" id="PTHR21567">
    <property type="entry name" value="CLASP"/>
    <property type="match status" value="1"/>
</dbReference>
<dbReference type="PANTHER" id="PTHR21567:SF9">
    <property type="entry name" value="CLIP-ASSOCIATING PROTEIN"/>
    <property type="match status" value="1"/>
</dbReference>
<dbReference type="Pfam" id="PF12348">
    <property type="entry name" value="CLASP_N"/>
    <property type="match status" value="1"/>
</dbReference>
<dbReference type="SMART" id="SM01349">
    <property type="entry name" value="TOG"/>
    <property type="match status" value="2"/>
</dbReference>
<dbReference type="SUPFAM" id="SSF48371">
    <property type="entry name" value="ARM repeat"/>
    <property type="match status" value="2"/>
</dbReference>
<accession>P32744</accession>
<proteinExistence type="evidence at protein level"/>